<feature type="chain" id="PRO_1000004118" description="Small ribosomal subunit protein uS2">
    <location>
        <begin position="1"/>
        <end position="241"/>
    </location>
</feature>
<comment type="similarity">
    <text evidence="1">Belongs to the universal ribosomal protein uS2 family.</text>
</comment>
<dbReference type="EMBL" id="CP000305">
    <property type="protein sequence ID" value="ABG19284.1"/>
    <property type="molecule type" value="Genomic_DNA"/>
</dbReference>
<dbReference type="EMBL" id="ACNQ01000017">
    <property type="protein sequence ID" value="EEO75432.1"/>
    <property type="molecule type" value="Genomic_DNA"/>
</dbReference>
<dbReference type="RefSeq" id="WP_002221800.1">
    <property type="nucleotide sequence ID" value="NZ_ACNQ01000017.1"/>
</dbReference>
<dbReference type="SMR" id="Q1CFE6"/>
<dbReference type="GeneID" id="57977517"/>
<dbReference type="KEGG" id="ypn:YPN_2957"/>
<dbReference type="HOGENOM" id="CLU_040318_1_0_6"/>
<dbReference type="Proteomes" id="UP000008936">
    <property type="component" value="Chromosome"/>
</dbReference>
<dbReference type="GO" id="GO:0022627">
    <property type="term" value="C:cytosolic small ribosomal subunit"/>
    <property type="evidence" value="ECO:0007669"/>
    <property type="project" value="TreeGrafter"/>
</dbReference>
<dbReference type="GO" id="GO:0003735">
    <property type="term" value="F:structural constituent of ribosome"/>
    <property type="evidence" value="ECO:0007669"/>
    <property type="project" value="InterPro"/>
</dbReference>
<dbReference type="GO" id="GO:0006412">
    <property type="term" value="P:translation"/>
    <property type="evidence" value="ECO:0007669"/>
    <property type="project" value="UniProtKB-UniRule"/>
</dbReference>
<dbReference type="CDD" id="cd01425">
    <property type="entry name" value="RPS2"/>
    <property type="match status" value="1"/>
</dbReference>
<dbReference type="FunFam" id="1.10.287.610:FF:000001">
    <property type="entry name" value="30S ribosomal protein S2"/>
    <property type="match status" value="1"/>
</dbReference>
<dbReference type="Gene3D" id="3.40.50.10490">
    <property type="entry name" value="Glucose-6-phosphate isomerase like protein, domain 1"/>
    <property type="match status" value="1"/>
</dbReference>
<dbReference type="Gene3D" id="1.10.287.610">
    <property type="entry name" value="Helix hairpin bin"/>
    <property type="match status" value="1"/>
</dbReference>
<dbReference type="HAMAP" id="MF_00291_B">
    <property type="entry name" value="Ribosomal_uS2_B"/>
    <property type="match status" value="1"/>
</dbReference>
<dbReference type="InterPro" id="IPR001865">
    <property type="entry name" value="Ribosomal_uS2"/>
</dbReference>
<dbReference type="InterPro" id="IPR005706">
    <property type="entry name" value="Ribosomal_uS2_bac/mit/plastid"/>
</dbReference>
<dbReference type="InterPro" id="IPR018130">
    <property type="entry name" value="Ribosomal_uS2_CS"/>
</dbReference>
<dbReference type="InterPro" id="IPR023591">
    <property type="entry name" value="Ribosomal_uS2_flav_dom_sf"/>
</dbReference>
<dbReference type="NCBIfam" id="TIGR01011">
    <property type="entry name" value="rpsB_bact"/>
    <property type="match status" value="1"/>
</dbReference>
<dbReference type="PANTHER" id="PTHR12534">
    <property type="entry name" value="30S RIBOSOMAL PROTEIN S2 PROKARYOTIC AND ORGANELLAR"/>
    <property type="match status" value="1"/>
</dbReference>
<dbReference type="PANTHER" id="PTHR12534:SF0">
    <property type="entry name" value="SMALL RIBOSOMAL SUBUNIT PROTEIN US2M"/>
    <property type="match status" value="1"/>
</dbReference>
<dbReference type="Pfam" id="PF00318">
    <property type="entry name" value="Ribosomal_S2"/>
    <property type="match status" value="1"/>
</dbReference>
<dbReference type="PRINTS" id="PR00395">
    <property type="entry name" value="RIBOSOMALS2"/>
</dbReference>
<dbReference type="SUPFAM" id="SSF52313">
    <property type="entry name" value="Ribosomal protein S2"/>
    <property type="match status" value="1"/>
</dbReference>
<dbReference type="PROSITE" id="PS00962">
    <property type="entry name" value="RIBOSOMAL_S2_1"/>
    <property type="match status" value="1"/>
</dbReference>
<dbReference type="PROSITE" id="PS00963">
    <property type="entry name" value="RIBOSOMAL_S2_2"/>
    <property type="match status" value="1"/>
</dbReference>
<protein>
    <recommendedName>
        <fullName evidence="1">Small ribosomal subunit protein uS2</fullName>
    </recommendedName>
    <alternativeName>
        <fullName evidence="2">30S ribosomal protein S2</fullName>
    </alternativeName>
</protein>
<organism>
    <name type="scientific">Yersinia pestis bv. Antiqua (strain Nepal516)</name>
    <dbReference type="NCBI Taxonomy" id="377628"/>
    <lineage>
        <taxon>Bacteria</taxon>
        <taxon>Pseudomonadati</taxon>
        <taxon>Pseudomonadota</taxon>
        <taxon>Gammaproteobacteria</taxon>
        <taxon>Enterobacterales</taxon>
        <taxon>Yersiniaceae</taxon>
        <taxon>Yersinia</taxon>
    </lineage>
</organism>
<sequence length="241" mass="26841">MATVSMRDMLQAGVHFGHQTRYWNPKMKPFIFGARNKVHIINLEKTVPMFNEALAELTKISSRKGKILFVGTKRAASEAVKEAANNCDQFFVNHRWLGGMLTNWKTVRQSIKRLKDLEIQSQDGTFDKLTKKEALMRTRELNKLENSLGGIKDMGGLPDALFVVDADHEHIAIKEANNLGIPVFSIVDTNSDPDGVDFIIPGNDDAIRAVKLYLGAVATAVREGRSQDLAVQAEESFVEAE</sequence>
<reference key="1">
    <citation type="journal article" date="2006" name="J. Bacteriol.">
        <title>Complete genome sequence of Yersinia pestis strains Antiqua and Nepal516: evidence of gene reduction in an emerging pathogen.</title>
        <authorList>
            <person name="Chain P.S.G."/>
            <person name="Hu P."/>
            <person name="Malfatti S.A."/>
            <person name="Radnedge L."/>
            <person name="Larimer F."/>
            <person name="Vergez L.M."/>
            <person name="Worsham P."/>
            <person name="Chu M.C."/>
            <person name="Andersen G.L."/>
        </authorList>
    </citation>
    <scope>NUCLEOTIDE SEQUENCE [LARGE SCALE GENOMIC DNA]</scope>
    <source>
        <strain>Nepal516</strain>
    </source>
</reference>
<reference key="2">
    <citation type="submission" date="2009-04" db="EMBL/GenBank/DDBJ databases">
        <title>Yersinia pestis Nepal516A whole genome shotgun sequencing project.</title>
        <authorList>
            <person name="Plunkett G. III"/>
            <person name="Anderson B.D."/>
            <person name="Baumler D.J."/>
            <person name="Burland V."/>
            <person name="Cabot E.L."/>
            <person name="Glasner J.D."/>
            <person name="Mau B."/>
            <person name="Neeno-Eckwall E."/>
            <person name="Perna N.T."/>
            <person name="Munk A.C."/>
            <person name="Tapia R."/>
            <person name="Green L.D."/>
            <person name="Rogers Y.C."/>
            <person name="Detter J.C."/>
            <person name="Bruce D.C."/>
            <person name="Brettin T.S."/>
        </authorList>
    </citation>
    <scope>NUCLEOTIDE SEQUENCE [LARGE SCALE GENOMIC DNA]</scope>
    <source>
        <strain>Nepal516</strain>
    </source>
</reference>
<accession>Q1CFE6</accession>
<accession>C4GWY2</accession>
<gene>
    <name evidence="1" type="primary">rpsB</name>
    <name type="ordered locus">YPN_2957</name>
    <name type="ORF">YP516_3346</name>
</gene>
<evidence type="ECO:0000255" key="1">
    <source>
        <dbReference type="HAMAP-Rule" id="MF_00291"/>
    </source>
</evidence>
<evidence type="ECO:0000305" key="2"/>
<keyword id="KW-0687">Ribonucleoprotein</keyword>
<keyword id="KW-0689">Ribosomal protein</keyword>
<name>RS2_YERPN</name>
<proteinExistence type="inferred from homology"/>